<organism>
    <name type="scientific">Pseudomonas syringae pv. tomato (strain ATCC BAA-871 / DC3000)</name>
    <dbReference type="NCBI Taxonomy" id="223283"/>
    <lineage>
        <taxon>Bacteria</taxon>
        <taxon>Pseudomonadati</taxon>
        <taxon>Pseudomonadota</taxon>
        <taxon>Gammaproteobacteria</taxon>
        <taxon>Pseudomonadales</taxon>
        <taxon>Pseudomonadaceae</taxon>
        <taxon>Pseudomonas</taxon>
    </lineage>
</organism>
<sequence>MSKSLQAIRGMNDILPEQTPLWRHFEGTVSRLLDNYGYRQIRMPVVEFTDLFKRSIGEVTDIVEKEMYTFADRNGDSLTLRPEGTAACVRAVLEHGITGGGQVQKLWYIGPMFRHERPQKGRYRQFHQIGVEVFNLDGPDIDAELIVMTWRLWGMLGIRNAVKLELNSLGTSEARARYRDALVEFLSAHLDQLDEDSQRRLKTNPLRVLDTKHPETQAVLVDAPKLADYLDDESRIHFEGLKARLDAAGIPYVINPKLVRGLDYYSKTVFEWVTDQLGAQGTVCAGGRYDGLVEQMGGKPTAGVGFAMGIERLVLLLETLEQVPEEIARQVDVYLCAFGEAAELAALALTEQVRDRLPNLRLQVNAGAGSFKSQFKKADKSGALYALILGEEELAAKIIGVKPLRGQGEQQNIAWDALSEHLASCVVQG</sequence>
<protein>
    <recommendedName>
        <fullName evidence="1">Histidine--tRNA ligase</fullName>
        <ecNumber evidence="1">6.1.1.21</ecNumber>
    </recommendedName>
    <alternativeName>
        <fullName evidence="1">Histidyl-tRNA synthetase</fullName>
        <shortName evidence="1">HisRS</shortName>
    </alternativeName>
</protein>
<proteinExistence type="inferred from homology"/>
<evidence type="ECO:0000255" key="1">
    <source>
        <dbReference type="HAMAP-Rule" id="MF_00127"/>
    </source>
</evidence>
<dbReference type="EC" id="6.1.1.21" evidence="1"/>
<dbReference type="EMBL" id="AE016853">
    <property type="protein sequence ID" value="AAO54956.1"/>
    <property type="molecule type" value="Genomic_DNA"/>
</dbReference>
<dbReference type="RefSeq" id="NP_791261.1">
    <property type="nucleotide sequence ID" value="NC_004578.1"/>
</dbReference>
<dbReference type="RefSeq" id="WP_011103548.1">
    <property type="nucleotide sequence ID" value="NC_004578.1"/>
</dbReference>
<dbReference type="SMR" id="Q886Y9"/>
<dbReference type="STRING" id="223283.PSPTO_1435"/>
<dbReference type="GeneID" id="1183072"/>
<dbReference type="KEGG" id="pst:PSPTO_1435"/>
<dbReference type="PATRIC" id="fig|223283.9.peg.1455"/>
<dbReference type="eggNOG" id="COG0124">
    <property type="taxonomic scope" value="Bacteria"/>
</dbReference>
<dbReference type="HOGENOM" id="CLU_025113_1_1_6"/>
<dbReference type="OrthoDB" id="9800814at2"/>
<dbReference type="PhylomeDB" id="Q886Y9"/>
<dbReference type="Proteomes" id="UP000002515">
    <property type="component" value="Chromosome"/>
</dbReference>
<dbReference type="GO" id="GO:0005737">
    <property type="term" value="C:cytoplasm"/>
    <property type="evidence" value="ECO:0007669"/>
    <property type="project" value="UniProtKB-SubCell"/>
</dbReference>
<dbReference type="GO" id="GO:0005524">
    <property type="term" value="F:ATP binding"/>
    <property type="evidence" value="ECO:0007669"/>
    <property type="project" value="UniProtKB-UniRule"/>
</dbReference>
<dbReference type="GO" id="GO:0004821">
    <property type="term" value="F:histidine-tRNA ligase activity"/>
    <property type="evidence" value="ECO:0007669"/>
    <property type="project" value="UniProtKB-UniRule"/>
</dbReference>
<dbReference type="GO" id="GO:0006427">
    <property type="term" value="P:histidyl-tRNA aminoacylation"/>
    <property type="evidence" value="ECO:0007669"/>
    <property type="project" value="UniProtKB-UniRule"/>
</dbReference>
<dbReference type="CDD" id="cd00773">
    <property type="entry name" value="HisRS-like_core"/>
    <property type="match status" value="1"/>
</dbReference>
<dbReference type="FunFam" id="3.30.930.10:FF:000005">
    <property type="entry name" value="Histidine--tRNA ligase"/>
    <property type="match status" value="1"/>
</dbReference>
<dbReference type="Gene3D" id="3.40.50.800">
    <property type="entry name" value="Anticodon-binding domain"/>
    <property type="match status" value="1"/>
</dbReference>
<dbReference type="Gene3D" id="3.30.930.10">
    <property type="entry name" value="Bira Bifunctional Protein, Domain 2"/>
    <property type="match status" value="1"/>
</dbReference>
<dbReference type="HAMAP" id="MF_00127">
    <property type="entry name" value="His_tRNA_synth"/>
    <property type="match status" value="1"/>
</dbReference>
<dbReference type="InterPro" id="IPR006195">
    <property type="entry name" value="aa-tRNA-synth_II"/>
</dbReference>
<dbReference type="InterPro" id="IPR045864">
    <property type="entry name" value="aa-tRNA-synth_II/BPL/LPL"/>
</dbReference>
<dbReference type="InterPro" id="IPR004154">
    <property type="entry name" value="Anticodon-bd"/>
</dbReference>
<dbReference type="InterPro" id="IPR036621">
    <property type="entry name" value="Anticodon-bd_dom_sf"/>
</dbReference>
<dbReference type="InterPro" id="IPR015807">
    <property type="entry name" value="His-tRNA-ligase"/>
</dbReference>
<dbReference type="InterPro" id="IPR041715">
    <property type="entry name" value="HisRS-like_core"/>
</dbReference>
<dbReference type="InterPro" id="IPR004516">
    <property type="entry name" value="HisRS/HisZ"/>
</dbReference>
<dbReference type="NCBIfam" id="TIGR00442">
    <property type="entry name" value="hisS"/>
    <property type="match status" value="1"/>
</dbReference>
<dbReference type="PANTHER" id="PTHR43707:SF1">
    <property type="entry name" value="HISTIDINE--TRNA LIGASE, MITOCHONDRIAL-RELATED"/>
    <property type="match status" value="1"/>
</dbReference>
<dbReference type="PANTHER" id="PTHR43707">
    <property type="entry name" value="HISTIDYL-TRNA SYNTHETASE"/>
    <property type="match status" value="1"/>
</dbReference>
<dbReference type="Pfam" id="PF03129">
    <property type="entry name" value="HGTP_anticodon"/>
    <property type="match status" value="1"/>
</dbReference>
<dbReference type="Pfam" id="PF13393">
    <property type="entry name" value="tRNA-synt_His"/>
    <property type="match status" value="1"/>
</dbReference>
<dbReference type="PIRSF" id="PIRSF001549">
    <property type="entry name" value="His-tRNA_synth"/>
    <property type="match status" value="1"/>
</dbReference>
<dbReference type="SUPFAM" id="SSF52954">
    <property type="entry name" value="Class II aaRS ABD-related"/>
    <property type="match status" value="1"/>
</dbReference>
<dbReference type="SUPFAM" id="SSF55681">
    <property type="entry name" value="Class II aaRS and biotin synthetases"/>
    <property type="match status" value="1"/>
</dbReference>
<dbReference type="PROSITE" id="PS50862">
    <property type="entry name" value="AA_TRNA_LIGASE_II"/>
    <property type="match status" value="1"/>
</dbReference>
<comment type="catalytic activity">
    <reaction evidence="1">
        <text>tRNA(His) + L-histidine + ATP = L-histidyl-tRNA(His) + AMP + diphosphate + H(+)</text>
        <dbReference type="Rhea" id="RHEA:17313"/>
        <dbReference type="Rhea" id="RHEA-COMP:9665"/>
        <dbReference type="Rhea" id="RHEA-COMP:9689"/>
        <dbReference type="ChEBI" id="CHEBI:15378"/>
        <dbReference type="ChEBI" id="CHEBI:30616"/>
        <dbReference type="ChEBI" id="CHEBI:33019"/>
        <dbReference type="ChEBI" id="CHEBI:57595"/>
        <dbReference type="ChEBI" id="CHEBI:78442"/>
        <dbReference type="ChEBI" id="CHEBI:78527"/>
        <dbReference type="ChEBI" id="CHEBI:456215"/>
        <dbReference type="EC" id="6.1.1.21"/>
    </reaction>
</comment>
<comment type="subunit">
    <text evidence="1">Homodimer.</text>
</comment>
<comment type="subcellular location">
    <subcellularLocation>
        <location evidence="1">Cytoplasm</location>
    </subcellularLocation>
</comment>
<comment type="similarity">
    <text evidence="1">Belongs to the class-II aminoacyl-tRNA synthetase family.</text>
</comment>
<gene>
    <name evidence="1" type="primary">hisS</name>
    <name type="ordered locus">PSPTO_1435</name>
</gene>
<accession>Q886Y9</accession>
<name>SYH_PSESM</name>
<keyword id="KW-0030">Aminoacyl-tRNA synthetase</keyword>
<keyword id="KW-0067">ATP-binding</keyword>
<keyword id="KW-0963">Cytoplasm</keyword>
<keyword id="KW-0436">Ligase</keyword>
<keyword id="KW-0547">Nucleotide-binding</keyword>
<keyword id="KW-0648">Protein biosynthesis</keyword>
<keyword id="KW-1185">Reference proteome</keyword>
<feature type="chain" id="PRO_0000136230" description="Histidine--tRNA ligase">
    <location>
        <begin position="1"/>
        <end position="429"/>
    </location>
</feature>
<reference key="1">
    <citation type="journal article" date="2003" name="Proc. Natl. Acad. Sci. U.S.A.">
        <title>The complete genome sequence of the Arabidopsis and tomato pathogen Pseudomonas syringae pv. tomato DC3000.</title>
        <authorList>
            <person name="Buell C.R."/>
            <person name="Joardar V."/>
            <person name="Lindeberg M."/>
            <person name="Selengut J."/>
            <person name="Paulsen I.T."/>
            <person name="Gwinn M.L."/>
            <person name="Dodson R.J."/>
            <person name="DeBoy R.T."/>
            <person name="Durkin A.S."/>
            <person name="Kolonay J.F."/>
            <person name="Madupu R."/>
            <person name="Daugherty S.C."/>
            <person name="Brinkac L.M."/>
            <person name="Beanan M.J."/>
            <person name="Haft D.H."/>
            <person name="Nelson W.C."/>
            <person name="Davidsen T.M."/>
            <person name="Zafar N."/>
            <person name="Zhou L."/>
            <person name="Liu J."/>
            <person name="Yuan Q."/>
            <person name="Khouri H.M."/>
            <person name="Fedorova N.B."/>
            <person name="Tran B."/>
            <person name="Russell D."/>
            <person name="Berry K.J."/>
            <person name="Utterback T.R."/>
            <person name="Van Aken S.E."/>
            <person name="Feldblyum T.V."/>
            <person name="D'Ascenzo M."/>
            <person name="Deng W.-L."/>
            <person name="Ramos A.R."/>
            <person name="Alfano J.R."/>
            <person name="Cartinhour S."/>
            <person name="Chatterjee A.K."/>
            <person name="Delaney T.P."/>
            <person name="Lazarowitz S.G."/>
            <person name="Martin G.B."/>
            <person name="Schneider D.J."/>
            <person name="Tang X."/>
            <person name="Bender C.L."/>
            <person name="White O."/>
            <person name="Fraser C.M."/>
            <person name="Collmer A."/>
        </authorList>
    </citation>
    <scope>NUCLEOTIDE SEQUENCE [LARGE SCALE GENOMIC DNA]</scope>
    <source>
        <strain>ATCC BAA-871 / DC3000</strain>
    </source>
</reference>